<accession>A2RV61</accession>
<keyword id="KW-0254">Endocytosis</keyword>
<keyword id="KW-0967">Endosome</keyword>
<keyword id="KW-0343">GTPase activation</keyword>
<keyword id="KW-0344">Guanine-nucleotide releasing factor</keyword>
<keyword id="KW-0472">Membrane</keyword>
<keyword id="KW-0597">Phosphoprotein</keyword>
<keyword id="KW-1185">Reference proteome</keyword>
<protein>
    <recommendedName>
        <fullName>GTPase-activating protein and VPS9 domain-containing protein 1</fullName>
    </recommendedName>
</protein>
<name>GAPD1_XENLA</name>
<dbReference type="EMBL" id="BC133191">
    <property type="protein sequence ID" value="AAI33192.1"/>
    <property type="molecule type" value="mRNA"/>
</dbReference>
<dbReference type="RefSeq" id="NP_001091308.1">
    <property type="nucleotide sequence ID" value="NM_001097839.1"/>
</dbReference>
<dbReference type="SMR" id="A2RV61"/>
<dbReference type="BioGRID" id="674411">
    <property type="interactions" value="1"/>
</dbReference>
<dbReference type="IntAct" id="A2RV61">
    <property type="interactions" value="1"/>
</dbReference>
<dbReference type="GeneID" id="100037133"/>
<dbReference type="KEGG" id="xla:100037133"/>
<dbReference type="AGR" id="Xenbase:XB-GENE-997392"/>
<dbReference type="CTD" id="100037133"/>
<dbReference type="Xenbase" id="XB-GENE-997392">
    <property type="gene designation" value="gapvd1.S"/>
</dbReference>
<dbReference type="OrthoDB" id="10264848at2759"/>
<dbReference type="Proteomes" id="UP000186698">
    <property type="component" value="Chromosome 8S"/>
</dbReference>
<dbReference type="Bgee" id="100037133">
    <property type="expression patterns" value="Expressed in egg cell and 19 other cell types or tissues"/>
</dbReference>
<dbReference type="GO" id="GO:0005829">
    <property type="term" value="C:cytosol"/>
    <property type="evidence" value="ECO:0000250"/>
    <property type="project" value="UniProtKB"/>
</dbReference>
<dbReference type="GO" id="GO:0030139">
    <property type="term" value="C:endocytic vesicle"/>
    <property type="evidence" value="ECO:0000318"/>
    <property type="project" value="GO_Central"/>
</dbReference>
<dbReference type="GO" id="GO:0005768">
    <property type="term" value="C:endosome"/>
    <property type="evidence" value="ECO:0007669"/>
    <property type="project" value="UniProtKB-SubCell"/>
</dbReference>
<dbReference type="GO" id="GO:0016020">
    <property type="term" value="C:membrane"/>
    <property type="evidence" value="ECO:0007669"/>
    <property type="project" value="UniProtKB-SubCell"/>
</dbReference>
<dbReference type="GO" id="GO:0032794">
    <property type="term" value="F:GTPase activating protein binding"/>
    <property type="evidence" value="ECO:0000250"/>
    <property type="project" value="UniProtKB"/>
</dbReference>
<dbReference type="GO" id="GO:0005096">
    <property type="term" value="F:GTPase activator activity"/>
    <property type="evidence" value="ECO:0007669"/>
    <property type="project" value="UniProtKB-KW"/>
</dbReference>
<dbReference type="GO" id="GO:0005085">
    <property type="term" value="F:guanyl-nucleotide exchange factor activity"/>
    <property type="evidence" value="ECO:0000250"/>
    <property type="project" value="UniProtKB"/>
</dbReference>
<dbReference type="GO" id="GO:0031267">
    <property type="term" value="F:small GTPase binding"/>
    <property type="evidence" value="ECO:0000318"/>
    <property type="project" value="GO_Central"/>
</dbReference>
<dbReference type="GO" id="GO:0006897">
    <property type="term" value="P:endocytosis"/>
    <property type="evidence" value="ECO:0007669"/>
    <property type="project" value="UniProtKB-KW"/>
</dbReference>
<dbReference type="GO" id="GO:0051223">
    <property type="term" value="P:regulation of protein transport"/>
    <property type="evidence" value="ECO:0000250"/>
    <property type="project" value="UniProtKB"/>
</dbReference>
<dbReference type="CDD" id="cd05129">
    <property type="entry name" value="RasGAP_RAP6"/>
    <property type="match status" value="1"/>
</dbReference>
<dbReference type="FunFam" id="1.10.506.10:FF:000009">
    <property type="entry name" value="GTPase-activating protein and VPS9 domain-containing protein 1 isoform X1"/>
    <property type="match status" value="1"/>
</dbReference>
<dbReference type="FunFam" id="1.20.1050.80:FF:000001">
    <property type="entry name" value="GTPase-activating protein and VPS9 domain-containing protein 1 isoform X1"/>
    <property type="match status" value="1"/>
</dbReference>
<dbReference type="Gene3D" id="1.10.246.120">
    <property type="match status" value="1"/>
</dbReference>
<dbReference type="Gene3D" id="1.10.506.10">
    <property type="entry name" value="GTPase Activation - p120gap, domain 1"/>
    <property type="match status" value="1"/>
</dbReference>
<dbReference type="Gene3D" id="1.20.1050.80">
    <property type="entry name" value="VPS9 domain"/>
    <property type="match status" value="1"/>
</dbReference>
<dbReference type="InterPro" id="IPR041545">
    <property type="entry name" value="DUF5601"/>
</dbReference>
<dbReference type="InterPro" id="IPR001936">
    <property type="entry name" value="RasGAP_dom"/>
</dbReference>
<dbReference type="InterPro" id="IPR008936">
    <property type="entry name" value="Rho_GTPase_activation_prot"/>
</dbReference>
<dbReference type="InterPro" id="IPR003123">
    <property type="entry name" value="VPS9"/>
</dbReference>
<dbReference type="InterPro" id="IPR045046">
    <property type="entry name" value="Vps9-like"/>
</dbReference>
<dbReference type="InterPro" id="IPR037191">
    <property type="entry name" value="VPS9_dom_sf"/>
</dbReference>
<dbReference type="PANTHER" id="PTHR23101:SF25">
    <property type="entry name" value="GTPASE-ACTIVATING PROTEIN AND VPS9 DOMAIN-CONTAINING PROTEIN 1"/>
    <property type="match status" value="1"/>
</dbReference>
<dbReference type="PANTHER" id="PTHR23101">
    <property type="entry name" value="RAB GDP/GTP EXCHANGE FACTOR"/>
    <property type="match status" value="1"/>
</dbReference>
<dbReference type="Pfam" id="PF18151">
    <property type="entry name" value="DUF5601"/>
    <property type="match status" value="1"/>
</dbReference>
<dbReference type="Pfam" id="PF00616">
    <property type="entry name" value="RasGAP"/>
    <property type="match status" value="1"/>
</dbReference>
<dbReference type="Pfam" id="PF02204">
    <property type="entry name" value="VPS9"/>
    <property type="match status" value="1"/>
</dbReference>
<dbReference type="SMART" id="SM00167">
    <property type="entry name" value="VPS9"/>
    <property type="match status" value="1"/>
</dbReference>
<dbReference type="SUPFAM" id="SSF48350">
    <property type="entry name" value="GTPase activation domain, GAP"/>
    <property type="match status" value="1"/>
</dbReference>
<dbReference type="SUPFAM" id="SSF109993">
    <property type="entry name" value="VPS9 domain"/>
    <property type="match status" value="1"/>
</dbReference>
<dbReference type="PROSITE" id="PS50018">
    <property type="entry name" value="RAS_GTPASE_ACTIV_2"/>
    <property type="match status" value="1"/>
</dbReference>
<dbReference type="PROSITE" id="PS51205">
    <property type="entry name" value="VPS9"/>
    <property type="match status" value="1"/>
</dbReference>
<organism>
    <name type="scientific">Xenopus laevis</name>
    <name type="common">African clawed frog</name>
    <dbReference type="NCBI Taxonomy" id="8355"/>
    <lineage>
        <taxon>Eukaryota</taxon>
        <taxon>Metazoa</taxon>
        <taxon>Chordata</taxon>
        <taxon>Craniata</taxon>
        <taxon>Vertebrata</taxon>
        <taxon>Euteleostomi</taxon>
        <taxon>Amphibia</taxon>
        <taxon>Batrachia</taxon>
        <taxon>Anura</taxon>
        <taxon>Pipoidea</taxon>
        <taxon>Pipidae</taxon>
        <taxon>Xenopodinae</taxon>
        <taxon>Xenopus</taxon>
        <taxon>Xenopus</taxon>
    </lineage>
</organism>
<sequence>MVKPDIHTLAHHLKQERLYVNSEKQLIQRLNADLLKTAERLYRTSWIAKQQRINLDRLILTSAEASPAECCQHAKVLEDTQFVDGYKQLGFQETAYGEFLNLLRENPRLIASCLVTGEKLNQENAQSVIHTVFTSLYGNCIMQEDESYLLQVLRYLIEFELKESDNPRRLLRKGTCAFSIIFKLFSEGLFSAKLFLTATLHEPIMQLLVEDEDHLETDPAKLIERFSPAQQEKLFGGKGTEAFRQRVQAMVETNEAKLVALVNKFIGYLKQNTYCFPHSLRWIVSQMFKTLSCVEGLEVSEVRSMCTDLLLTCFICPAIVNPEQYGIISDAPINEVARFNLMQVGRLLQQLALTGFEERDSRNKSNLNKFDKSCVAAFLDVVIGGRAVETPPLSSVNLLEGLSRTVVYMTYSQLMSLLGFMRTVISSEQLQEEDRMALENLLATVPQTKPGKSNNDTPYSTPQLSPATTPACKKNRLPIVTRSRSKTNLMETENECSPQEVTPNQPEEVLVISLGTGPQLTPGMMSENEVLNMQLVDGGQGDVPVDESKLHGKPDKTLRFSLCSDNLEGISEEEENPCSTGPSNRSNSVSSLDLEGESVSELGGGPSGSNGVEALQLLEHEQATTQDNLDDKLRKFEIRDMMGLTDDRDISETVSETWSTDVLGSDFDPNIDEDRLQEIAGAAAENMLGSLLCLPGSLLLDPCTISETTSEAWSVEVLPSDSAPDLKQEERLHELESCSGLGSTSDDTEVREVSSRPSTPGLSVVSGISATSEDIPNKTEDLRSECSSDFGGKDSVTSPEAEESVHGPHHITTPPTQSESLLAMFDPLAPASSEVVRPKVHYARPSHPPPDPPVLEGASGGNEARLPMFCSHVFIHTDSEAYRQRHSCPERLVRSRSSDIASSIRRPISDPGWVRRGINEDRELLTGTAVNALINPPQSSSFSPSKDSSRGEPDEKKDSDDERSDRNKPWWKKRFVSAMPKAPIPFRKKEKQEKEREDFVQDRFYVAVDSTSQLGPHSQAAEDILAKYRNAIKRTIPNEGSTMPYEGADPVGDGESLHESPRDEALQNMTSDDLLDSANQVAHPQESAFSYRDAKKKLRLALCSADSVAFPVLSHSTRNGLPDHTDPEDNEIVCFLKVQLAEAINLQDKNLMAQIQETMRCVSRFDSRSCSKILSSLAEDYRKRASYIAYLTRCRQGLQSTQAHLDRLLQRVLRDKEVSTRYFTTVCVRLLLESKENEIHEFIQDFQKLTAADDKTAQVEEFLQSLYGAMAQDVIWQNASEEQLQDAQIAIERSIMNRIFKLAFNPNQDADILRDQVLHEHIKRLSKVVTANHRALQIPEVYLREAPWPSAQTEIRTISAYKTPRDKVQCILRMCSTIMNLLSLANEYSVPGADDFVPVLVFVLIKANPTYLLSTVQYISSFYSNRLIGEESYWWMQFTAAVEFIKTIDDRK</sequence>
<feature type="chain" id="PRO_0000324773" description="GTPase-activating protein and VPS9 domain-containing protein 1">
    <location>
        <begin position="1"/>
        <end position="1452"/>
    </location>
</feature>
<feature type="domain" description="Ras-GAP" evidence="2">
    <location>
        <begin position="147"/>
        <end position="385"/>
    </location>
</feature>
<feature type="domain" description="VPS9" evidence="3">
    <location>
        <begin position="1312"/>
        <end position="1452"/>
    </location>
</feature>
<feature type="region of interest" description="Disordered" evidence="4">
    <location>
        <begin position="445"/>
        <end position="471"/>
    </location>
</feature>
<feature type="region of interest" description="Disordered" evidence="4">
    <location>
        <begin position="571"/>
        <end position="611"/>
    </location>
</feature>
<feature type="region of interest" description="Disordered" evidence="4">
    <location>
        <begin position="735"/>
        <end position="816"/>
    </location>
</feature>
<feature type="region of interest" description="Disordered" evidence="4">
    <location>
        <begin position="885"/>
        <end position="912"/>
    </location>
</feature>
<feature type="region of interest" description="Disordered" evidence="4">
    <location>
        <begin position="929"/>
        <end position="974"/>
    </location>
</feature>
<feature type="region of interest" description="Disordered" evidence="4">
    <location>
        <begin position="1037"/>
        <end position="1063"/>
    </location>
</feature>
<feature type="compositionally biased region" description="Polar residues" evidence="4">
    <location>
        <begin position="445"/>
        <end position="468"/>
    </location>
</feature>
<feature type="compositionally biased region" description="Polar residues" evidence="4">
    <location>
        <begin position="577"/>
        <end position="587"/>
    </location>
</feature>
<feature type="compositionally biased region" description="Low complexity" evidence="4">
    <location>
        <begin position="588"/>
        <end position="601"/>
    </location>
</feature>
<feature type="compositionally biased region" description="Polar residues" evidence="4">
    <location>
        <begin position="755"/>
        <end position="774"/>
    </location>
</feature>
<feature type="compositionally biased region" description="Basic and acidic residues" evidence="4">
    <location>
        <begin position="775"/>
        <end position="786"/>
    </location>
</feature>
<feature type="compositionally biased region" description="Basic and acidic residues" evidence="4">
    <location>
        <begin position="885"/>
        <end position="897"/>
    </location>
</feature>
<feature type="compositionally biased region" description="Low complexity" evidence="4">
    <location>
        <begin position="898"/>
        <end position="911"/>
    </location>
</feature>
<feature type="compositionally biased region" description="Low complexity" evidence="4">
    <location>
        <begin position="936"/>
        <end position="946"/>
    </location>
</feature>
<feature type="compositionally biased region" description="Basic and acidic residues" evidence="4">
    <location>
        <begin position="947"/>
        <end position="968"/>
    </location>
</feature>
<feature type="site" description="Arginine finger; crucial for GTP hydrolysis by stabilizing the transition state" evidence="2">
    <location>
        <position position="172"/>
    </location>
</feature>
<evidence type="ECO:0000250" key="1"/>
<evidence type="ECO:0000255" key="2">
    <source>
        <dbReference type="PROSITE-ProRule" id="PRU00167"/>
    </source>
</evidence>
<evidence type="ECO:0000255" key="3">
    <source>
        <dbReference type="PROSITE-ProRule" id="PRU00550"/>
    </source>
</evidence>
<evidence type="ECO:0000256" key="4">
    <source>
        <dbReference type="SAM" id="MobiDB-lite"/>
    </source>
</evidence>
<evidence type="ECO:0000305" key="5"/>
<comment type="function">
    <text evidence="1">Acts both as a GTPase-activating protein (GAP) and a guanine nucleotide exchange factor (GEF), and participates in various processes such as endocytosis, insulin receptor internalization or LC2A4/GLUT4 trafficking.</text>
</comment>
<comment type="subcellular location">
    <subcellularLocation>
        <location evidence="1">Membrane</location>
        <topology evidence="1">Peripheral membrane protein</topology>
    </subcellularLocation>
    <subcellularLocation>
        <location evidence="1">Endosome</location>
    </subcellularLocation>
</comment>
<comment type="similarity">
    <text evidence="5">Belongs to the GAPVD1 family.</text>
</comment>
<proteinExistence type="evidence at transcript level"/>
<reference key="1">
    <citation type="submission" date="2007-02" db="EMBL/GenBank/DDBJ databases">
        <authorList>
            <consortium name="NIH - Xenopus Gene Collection (XGC) project"/>
        </authorList>
    </citation>
    <scope>NUCLEOTIDE SEQUENCE [LARGE SCALE MRNA]</scope>
    <source>
        <tissue>Ovary</tissue>
    </source>
</reference>
<gene>
    <name type="primary">gapvd1</name>
</gene>